<keyword id="KW-1185">Reference proteome</keyword>
<keyword id="KW-0687">Ribonucleoprotein</keyword>
<keyword id="KW-0689">Ribosomal protein</keyword>
<keyword id="KW-0694">RNA-binding</keyword>
<keyword id="KW-0699">rRNA-binding</keyword>
<proteinExistence type="inferred from homology"/>
<organism>
    <name type="scientific">Desulforamulus reducens (strain ATCC BAA-1160 / DSM 100696 / MI-1)</name>
    <name type="common">Desulfotomaculum reducens</name>
    <dbReference type="NCBI Taxonomy" id="349161"/>
    <lineage>
        <taxon>Bacteria</taxon>
        <taxon>Bacillati</taxon>
        <taxon>Bacillota</taxon>
        <taxon>Clostridia</taxon>
        <taxon>Eubacteriales</taxon>
        <taxon>Peptococcaceae</taxon>
        <taxon>Desulforamulus</taxon>
    </lineage>
</organism>
<evidence type="ECO:0000255" key="1">
    <source>
        <dbReference type="HAMAP-Rule" id="MF_00382"/>
    </source>
</evidence>
<evidence type="ECO:0000305" key="2"/>
<dbReference type="EMBL" id="CP000612">
    <property type="protein sequence ID" value="ABO50143.1"/>
    <property type="molecule type" value="Genomic_DNA"/>
</dbReference>
<dbReference type="RefSeq" id="WP_011877959.1">
    <property type="nucleotide sequence ID" value="NC_009253.1"/>
</dbReference>
<dbReference type="SMR" id="A4J4Z0"/>
<dbReference type="STRING" id="349161.Dred_1615"/>
<dbReference type="KEGG" id="drm:Dred_1615"/>
<dbReference type="eggNOG" id="COG0292">
    <property type="taxonomic scope" value="Bacteria"/>
</dbReference>
<dbReference type="HOGENOM" id="CLU_123265_0_1_9"/>
<dbReference type="OrthoDB" id="9808966at2"/>
<dbReference type="Proteomes" id="UP000001556">
    <property type="component" value="Chromosome"/>
</dbReference>
<dbReference type="GO" id="GO:1990904">
    <property type="term" value="C:ribonucleoprotein complex"/>
    <property type="evidence" value="ECO:0007669"/>
    <property type="project" value="UniProtKB-KW"/>
</dbReference>
<dbReference type="GO" id="GO:0005840">
    <property type="term" value="C:ribosome"/>
    <property type="evidence" value="ECO:0007669"/>
    <property type="project" value="UniProtKB-KW"/>
</dbReference>
<dbReference type="GO" id="GO:0019843">
    <property type="term" value="F:rRNA binding"/>
    <property type="evidence" value="ECO:0007669"/>
    <property type="project" value="UniProtKB-UniRule"/>
</dbReference>
<dbReference type="GO" id="GO:0003735">
    <property type="term" value="F:structural constituent of ribosome"/>
    <property type="evidence" value="ECO:0007669"/>
    <property type="project" value="InterPro"/>
</dbReference>
<dbReference type="GO" id="GO:0000027">
    <property type="term" value="P:ribosomal large subunit assembly"/>
    <property type="evidence" value="ECO:0007669"/>
    <property type="project" value="UniProtKB-UniRule"/>
</dbReference>
<dbReference type="GO" id="GO:0006412">
    <property type="term" value="P:translation"/>
    <property type="evidence" value="ECO:0007669"/>
    <property type="project" value="InterPro"/>
</dbReference>
<dbReference type="CDD" id="cd07026">
    <property type="entry name" value="Ribosomal_L20"/>
    <property type="match status" value="1"/>
</dbReference>
<dbReference type="FunFam" id="1.10.1900.20:FF:000001">
    <property type="entry name" value="50S ribosomal protein L20"/>
    <property type="match status" value="1"/>
</dbReference>
<dbReference type="Gene3D" id="6.10.160.10">
    <property type="match status" value="1"/>
</dbReference>
<dbReference type="Gene3D" id="1.10.1900.20">
    <property type="entry name" value="Ribosomal protein L20"/>
    <property type="match status" value="1"/>
</dbReference>
<dbReference type="HAMAP" id="MF_00382">
    <property type="entry name" value="Ribosomal_bL20"/>
    <property type="match status" value="1"/>
</dbReference>
<dbReference type="InterPro" id="IPR005813">
    <property type="entry name" value="Ribosomal_bL20"/>
</dbReference>
<dbReference type="InterPro" id="IPR049946">
    <property type="entry name" value="RIBOSOMAL_L20_CS"/>
</dbReference>
<dbReference type="InterPro" id="IPR035566">
    <property type="entry name" value="Ribosomal_protein_bL20_C"/>
</dbReference>
<dbReference type="NCBIfam" id="TIGR01032">
    <property type="entry name" value="rplT_bact"/>
    <property type="match status" value="1"/>
</dbReference>
<dbReference type="PANTHER" id="PTHR10986">
    <property type="entry name" value="39S RIBOSOMAL PROTEIN L20"/>
    <property type="match status" value="1"/>
</dbReference>
<dbReference type="Pfam" id="PF00453">
    <property type="entry name" value="Ribosomal_L20"/>
    <property type="match status" value="1"/>
</dbReference>
<dbReference type="PRINTS" id="PR00062">
    <property type="entry name" value="RIBOSOMALL20"/>
</dbReference>
<dbReference type="SUPFAM" id="SSF74731">
    <property type="entry name" value="Ribosomal protein L20"/>
    <property type="match status" value="1"/>
</dbReference>
<dbReference type="PROSITE" id="PS00937">
    <property type="entry name" value="RIBOSOMAL_L20"/>
    <property type="match status" value="1"/>
</dbReference>
<gene>
    <name evidence="1" type="primary">rplT</name>
    <name type="ordered locus">Dred_1615</name>
</gene>
<sequence>MPRAKSSVVSRNRHRKILKLAKGYRGSRSKLFRVANQAVMKGLFYAYRDRRQKKRDFRKLWIARINAATRMNGLSYSRFINGLKKAGVEVNRKMLADLAVNDAKAFGQLVELAKSKLA</sequence>
<name>RL20_DESRM</name>
<feature type="chain" id="PRO_1000072182" description="Large ribosomal subunit protein bL20">
    <location>
        <begin position="1"/>
        <end position="118"/>
    </location>
</feature>
<comment type="function">
    <text evidence="1">Binds directly to 23S ribosomal RNA and is necessary for the in vitro assembly process of the 50S ribosomal subunit. It is not involved in the protein synthesizing functions of that subunit.</text>
</comment>
<comment type="similarity">
    <text evidence="1">Belongs to the bacterial ribosomal protein bL20 family.</text>
</comment>
<protein>
    <recommendedName>
        <fullName evidence="1">Large ribosomal subunit protein bL20</fullName>
    </recommendedName>
    <alternativeName>
        <fullName evidence="2">50S ribosomal protein L20</fullName>
    </alternativeName>
</protein>
<reference key="1">
    <citation type="submission" date="2007-03" db="EMBL/GenBank/DDBJ databases">
        <title>Complete sequence of Desulfotomaculum reducens MI-1.</title>
        <authorList>
            <consortium name="US DOE Joint Genome Institute"/>
            <person name="Copeland A."/>
            <person name="Lucas S."/>
            <person name="Lapidus A."/>
            <person name="Barry K."/>
            <person name="Detter J.C."/>
            <person name="Glavina del Rio T."/>
            <person name="Hammon N."/>
            <person name="Israni S."/>
            <person name="Dalin E."/>
            <person name="Tice H."/>
            <person name="Pitluck S."/>
            <person name="Sims D."/>
            <person name="Brettin T."/>
            <person name="Bruce D."/>
            <person name="Han C."/>
            <person name="Tapia R."/>
            <person name="Schmutz J."/>
            <person name="Larimer F."/>
            <person name="Land M."/>
            <person name="Hauser L."/>
            <person name="Kyrpides N."/>
            <person name="Kim E."/>
            <person name="Tebo B.M."/>
            <person name="Richardson P."/>
        </authorList>
    </citation>
    <scope>NUCLEOTIDE SEQUENCE [LARGE SCALE GENOMIC DNA]</scope>
    <source>
        <strain>ATCC BAA-1160 / DSM 100696 / MI-1</strain>
    </source>
</reference>
<accession>A4J4Z0</accession>